<accession>Q61606</accession>
<accession>Q63960</accession>
<accession>Q8K0B5</accession>
<name>GLR_MOUSE</name>
<gene>
    <name type="primary">Gcgr</name>
</gene>
<dbReference type="EMBL" id="L38613">
    <property type="protein sequence ID" value="AAA88244.1"/>
    <property type="molecule type" value="mRNA"/>
</dbReference>
<dbReference type="EMBL" id="AL669855">
    <property type="status" value="NOT_ANNOTATED_CDS"/>
    <property type="molecule type" value="Genomic_DNA"/>
</dbReference>
<dbReference type="EMBL" id="CH466558">
    <property type="protein sequence ID" value="EDL34761.1"/>
    <property type="molecule type" value="Genomic_DNA"/>
</dbReference>
<dbReference type="EMBL" id="BC031885">
    <property type="protein sequence ID" value="AAH31885.1"/>
    <property type="molecule type" value="mRNA"/>
</dbReference>
<dbReference type="EMBL" id="BC057988">
    <property type="protein sequence ID" value="AAH57988.1"/>
    <property type="molecule type" value="mRNA"/>
</dbReference>
<dbReference type="EMBL" id="S69384">
    <property type="protein sequence ID" value="AAB30529.2"/>
    <property type="molecule type" value="mRNA"/>
</dbReference>
<dbReference type="CCDS" id="CCDS25739.1"/>
<dbReference type="PIR" id="JC4363">
    <property type="entry name" value="JC4363"/>
</dbReference>
<dbReference type="RefSeq" id="NP_032127.2">
    <property type="nucleotide sequence ID" value="NM_008101.3"/>
</dbReference>
<dbReference type="RefSeq" id="XP_017169755.1">
    <property type="nucleotide sequence ID" value="XM_017314266.1"/>
</dbReference>
<dbReference type="SMR" id="Q61606"/>
<dbReference type="BioGRID" id="199863">
    <property type="interactions" value="1"/>
</dbReference>
<dbReference type="FunCoup" id="Q61606">
    <property type="interactions" value="743"/>
</dbReference>
<dbReference type="STRING" id="10090.ENSMUSP00000026119"/>
<dbReference type="BindingDB" id="Q61606"/>
<dbReference type="ChEMBL" id="CHEMBL4773"/>
<dbReference type="GuidetoPHARMACOLOGY" id="251"/>
<dbReference type="GlyCosmos" id="Q61606">
    <property type="glycosylation" value="5 sites, No reported glycans"/>
</dbReference>
<dbReference type="GlyGen" id="Q61606">
    <property type="glycosylation" value="5 sites"/>
</dbReference>
<dbReference type="iPTMnet" id="Q61606"/>
<dbReference type="PhosphoSitePlus" id="Q61606"/>
<dbReference type="jPOST" id="Q61606"/>
<dbReference type="PaxDb" id="10090-ENSMUSP00000026119"/>
<dbReference type="ProteomicsDB" id="267459"/>
<dbReference type="ABCD" id="Q61606">
    <property type="antibodies" value="1 sequenced antibody"/>
</dbReference>
<dbReference type="Antibodypedia" id="4808">
    <property type="antibodies" value="522 antibodies from 37 providers"/>
</dbReference>
<dbReference type="DNASU" id="14527"/>
<dbReference type="Ensembl" id="ENSMUST00000026119.8">
    <property type="protein sequence ID" value="ENSMUSP00000026119.8"/>
    <property type="gene ID" value="ENSMUSG00000025127.16"/>
</dbReference>
<dbReference type="GeneID" id="14527"/>
<dbReference type="KEGG" id="mmu:14527"/>
<dbReference type="UCSC" id="uc007mtc.2">
    <property type="organism name" value="mouse"/>
</dbReference>
<dbReference type="AGR" id="MGI:99572"/>
<dbReference type="CTD" id="2642"/>
<dbReference type="MGI" id="MGI:99572">
    <property type="gene designation" value="Gcgr"/>
</dbReference>
<dbReference type="VEuPathDB" id="HostDB:ENSMUSG00000025127"/>
<dbReference type="eggNOG" id="KOG4564">
    <property type="taxonomic scope" value="Eukaryota"/>
</dbReference>
<dbReference type="GeneTree" id="ENSGT00940000157969"/>
<dbReference type="HOGENOM" id="CLU_002753_4_0_1"/>
<dbReference type="InParanoid" id="Q61606"/>
<dbReference type="OMA" id="HWHRWRL"/>
<dbReference type="OrthoDB" id="5967113at2759"/>
<dbReference type="PhylomeDB" id="Q61606"/>
<dbReference type="TreeFam" id="TF315710"/>
<dbReference type="Reactome" id="R-MMU-163359">
    <property type="pathway name" value="Glucagon signaling in metabolic regulation"/>
</dbReference>
<dbReference type="Reactome" id="R-MMU-416476">
    <property type="pathway name" value="G alpha (q) signalling events"/>
</dbReference>
<dbReference type="Reactome" id="R-MMU-418555">
    <property type="pathway name" value="G alpha (s) signalling events"/>
</dbReference>
<dbReference type="Reactome" id="R-MMU-420092">
    <property type="pathway name" value="Glucagon-type ligand receptors"/>
</dbReference>
<dbReference type="BioGRID-ORCS" id="14527">
    <property type="hits" value="2 hits in 77 CRISPR screens"/>
</dbReference>
<dbReference type="ChiTaRS" id="Gcgr">
    <property type="organism name" value="mouse"/>
</dbReference>
<dbReference type="PRO" id="PR:Q61606"/>
<dbReference type="Proteomes" id="UP000000589">
    <property type="component" value="Chromosome 11"/>
</dbReference>
<dbReference type="RNAct" id="Q61606">
    <property type="molecule type" value="protein"/>
</dbReference>
<dbReference type="Bgee" id="ENSMUSG00000025127">
    <property type="expression patterns" value="Expressed in lobe of liver and 76 other cell types or tissues"/>
</dbReference>
<dbReference type="GO" id="GO:0005886">
    <property type="term" value="C:plasma membrane"/>
    <property type="evidence" value="ECO:0000314"/>
    <property type="project" value="MGI"/>
</dbReference>
<dbReference type="GO" id="GO:0004967">
    <property type="term" value="F:glucagon receptor activity"/>
    <property type="evidence" value="ECO:0000314"/>
    <property type="project" value="UniProtKB"/>
</dbReference>
<dbReference type="GO" id="GO:0007189">
    <property type="term" value="P:adenylate cyclase-activating G protein-coupled receptor signaling pathway"/>
    <property type="evidence" value="ECO:0000250"/>
    <property type="project" value="UniProtKB"/>
</dbReference>
<dbReference type="GO" id="GO:0007188">
    <property type="term" value="P:adenylate cyclase-modulating G protein-coupled receptor signaling pathway"/>
    <property type="evidence" value="ECO:0000314"/>
    <property type="project" value="UniProtKB"/>
</dbReference>
<dbReference type="GO" id="GO:0007166">
    <property type="term" value="P:cell surface receptor signaling pathway"/>
    <property type="evidence" value="ECO:0007669"/>
    <property type="project" value="InterPro"/>
</dbReference>
<dbReference type="GO" id="GO:0071377">
    <property type="term" value="P:cellular response to glucagon stimulus"/>
    <property type="evidence" value="ECO:0000314"/>
    <property type="project" value="UniProtKB"/>
</dbReference>
<dbReference type="GO" id="GO:0009267">
    <property type="term" value="P:cellular response to starvation"/>
    <property type="evidence" value="ECO:0000315"/>
    <property type="project" value="ARUK-UCL"/>
</dbReference>
<dbReference type="GO" id="GO:0042593">
    <property type="term" value="P:glucose homeostasis"/>
    <property type="evidence" value="ECO:0000315"/>
    <property type="project" value="UniProtKB"/>
</dbReference>
<dbReference type="GO" id="GO:0010628">
    <property type="term" value="P:positive regulation of gene expression"/>
    <property type="evidence" value="ECO:0000315"/>
    <property type="project" value="ARUK-UCL"/>
</dbReference>
<dbReference type="GO" id="GO:0070873">
    <property type="term" value="P:regulation of glycogen metabolic process"/>
    <property type="evidence" value="ECO:0000315"/>
    <property type="project" value="UniProtKB"/>
</dbReference>
<dbReference type="GO" id="GO:0042594">
    <property type="term" value="P:response to starvation"/>
    <property type="evidence" value="ECO:0000315"/>
    <property type="project" value="UniProtKB"/>
</dbReference>
<dbReference type="CDD" id="cd15267">
    <property type="entry name" value="7tmB1_GCGR"/>
    <property type="match status" value="1"/>
</dbReference>
<dbReference type="FunFam" id="4.10.1240.10:FF:000009">
    <property type="entry name" value="Glucagon receptor"/>
    <property type="match status" value="1"/>
</dbReference>
<dbReference type="FunFam" id="1.20.1070.10:FF:000133">
    <property type="entry name" value="Glucagon receptor a"/>
    <property type="match status" value="1"/>
</dbReference>
<dbReference type="Gene3D" id="4.10.1240.10">
    <property type="entry name" value="GPCR, family 2, extracellular hormone receptor domain"/>
    <property type="match status" value="1"/>
</dbReference>
<dbReference type="Gene3D" id="1.20.1070.10">
    <property type="entry name" value="Rhodopsin 7-helix transmembrane proteins"/>
    <property type="match status" value="1"/>
</dbReference>
<dbReference type="InterPro" id="IPR050332">
    <property type="entry name" value="GPCR_2"/>
</dbReference>
<dbReference type="InterPro" id="IPR017981">
    <property type="entry name" value="GPCR_2-like_7TM"/>
</dbReference>
<dbReference type="InterPro" id="IPR036445">
    <property type="entry name" value="GPCR_2_extracell_dom_sf"/>
</dbReference>
<dbReference type="InterPro" id="IPR001879">
    <property type="entry name" value="GPCR_2_extracellular_dom"/>
</dbReference>
<dbReference type="InterPro" id="IPR003290">
    <property type="entry name" value="GPCR_2_GLP1/glucagon_rcpt"/>
</dbReference>
<dbReference type="InterPro" id="IPR003291">
    <property type="entry name" value="GPCR_2_glucagon_rcpt"/>
</dbReference>
<dbReference type="InterPro" id="IPR000832">
    <property type="entry name" value="GPCR_2_secretin-like"/>
</dbReference>
<dbReference type="InterPro" id="IPR017983">
    <property type="entry name" value="GPCR_2_secretin-like_CS"/>
</dbReference>
<dbReference type="PANTHER" id="PTHR45620:SF29">
    <property type="entry name" value="GLUCAGON RECEPTOR"/>
    <property type="match status" value="1"/>
</dbReference>
<dbReference type="PANTHER" id="PTHR45620">
    <property type="entry name" value="PDF RECEPTOR-LIKE PROTEIN-RELATED"/>
    <property type="match status" value="1"/>
</dbReference>
<dbReference type="Pfam" id="PF00002">
    <property type="entry name" value="7tm_2"/>
    <property type="match status" value="1"/>
</dbReference>
<dbReference type="Pfam" id="PF02793">
    <property type="entry name" value="HRM"/>
    <property type="match status" value="1"/>
</dbReference>
<dbReference type="PRINTS" id="PR01353">
    <property type="entry name" value="GLUCAGNFAMLY"/>
</dbReference>
<dbReference type="PRINTS" id="PR01354">
    <property type="entry name" value="GLUCAGONR"/>
</dbReference>
<dbReference type="PRINTS" id="PR00249">
    <property type="entry name" value="GPCRSECRETIN"/>
</dbReference>
<dbReference type="SMART" id="SM00008">
    <property type="entry name" value="HormR"/>
    <property type="match status" value="1"/>
</dbReference>
<dbReference type="SUPFAM" id="SSF81321">
    <property type="entry name" value="Family A G protein-coupled receptor-like"/>
    <property type="match status" value="1"/>
</dbReference>
<dbReference type="SUPFAM" id="SSF111418">
    <property type="entry name" value="Hormone receptor domain"/>
    <property type="match status" value="1"/>
</dbReference>
<dbReference type="PROSITE" id="PS00649">
    <property type="entry name" value="G_PROTEIN_RECEP_F2_1"/>
    <property type="match status" value="1"/>
</dbReference>
<dbReference type="PROSITE" id="PS00650">
    <property type="entry name" value="G_PROTEIN_RECEP_F2_2"/>
    <property type="match status" value="1"/>
</dbReference>
<dbReference type="PROSITE" id="PS50227">
    <property type="entry name" value="G_PROTEIN_RECEP_F2_3"/>
    <property type="match status" value="1"/>
</dbReference>
<dbReference type="PROSITE" id="PS50261">
    <property type="entry name" value="G_PROTEIN_RECEP_F2_4"/>
    <property type="match status" value="1"/>
</dbReference>
<organism>
    <name type="scientific">Mus musculus</name>
    <name type="common">Mouse</name>
    <dbReference type="NCBI Taxonomy" id="10090"/>
    <lineage>
        <taxon>Eukaryota</taxon>
        <taxon>Metazoa</taxon>
        <taxon>Chordata</taxon>
        <taxon>Craniata</taxon>
        <taxon>Vertebrata</taxon>
        <taxon>Euteleostomi</taxon>
        <taxon>Mammalia</taxon>
        <taxon>Eutheria</taxon>
        <taxon>Euarchontoglires</taxon>
        <taxon>Glires</taxon>
        <taxon>Rodentia</taxon>
        <taxon>Myomorpha</taxon>
        <taxon>Muroidea</taxon>
        <taxon>Muridae</taxon>
        <taxon>Murinae</taxon>
        <taxon>Mus</taxon>
        <taxon>Mus</taxon>
    </lineage>
</organism>
<comment type="function">
    <text evidence="6 8 9">G-protein coupled receptor for glucagon that plays a central role in the regulation of blood glucose levels and glucose homeostasis. Regulates the rate of hepatic glucose production by promoting glycogen hydrolysis and gluconeogenesis. Plays an important role in mediating the responses to fasting. Ligand binding causes a conformation change that triggers signaling via guanine nucleotide-binding proteins (G proteins) and modulates the activity of down-stream effectors, such as adenylate cyclase. Promotes activation of adenylate cyclase. Besides, plays a role in signaling via a phosphatidylinositol-calcium second messenger system.</text>
</comment>
<comment type="subcellular location">
    <subcellularLocation>
        <location evidence="6">Cell membrane</location>
        <topology evidence="6">Multi-pass membrane protein</topology>
    </subcellularLocation>
    <text evidence="3">Is rapidly internalized after ligand-binding.</text>
</comment>
<comment type="tissue specificity">
    <text evidence="10">Expressed predominantly in liver, kidney, adrenal, lung and stomach, while lower levels of expression are detected in brown and white adipose tissue, cerebellum, duodenum and heart.</text>
</comment>
<comment type="PTM">
    <text evidence="3">Ligand-binding promotes phosphorylation of serine residues in the C-terminal cytoplasmic domain. Phosphorylation is important for receptor endocytosis after ligand-binding (By similarity).</text>
</comment>
<comment type="disruption phenotype">
    <text evidence="6 7 8">Mice are born at the expected Mendelian rate. They display pancreas islet and alpha-cell hyperplasia and increased glucagon levels, but normal insulin levels. Mice display low blood glucose levels combined with increased hepatic glycogen levels. They develop severe hypoglycemia after prolonged fasting. Mutant mice are fertile, but the females produce only few pups; half of the embryos die before birth, and liveborn pups do not survive more than one day. These pups are much smaller than their littermates and exhibit severe hypoglycemia.</text>
</comment>
<comment type="miscellaneous">
    <text evidence="1">Selective recognition of glucagon over glucagon-like peptide is determined by residues located at the N-terminal end of the glucagon peptide.</text>
</comment>
<comment type="similarity">
    <text evidence="11">Belongs to the G-protein coupled receptor 2 family.</text>
</comment>
<reference key="1">
    <citation type="journal article" date="1995" name="Gene">
        <title>Cloning and sequence analysis of the murine glucagon receptor-encoding gene.</title>
        <authorList>
            <person name="Burcelin R."/>
            <person name="Li J."/>
            <person name="Charron M.J."/>
        </authorList>
    </citation>
    <scope>NUCLEOTIDE SEQUENCE [MRNA]</scope>
    <scope>TISSUE SPECIFICITY</scope>
</reference>
<reference key="2">
    <citation type="journal article" date="2009" name="PLoS Biol.">
        <title>Lineage-specific biology revealed by a finished genome assembly of the mouse.</title>
        <authorList>
            <person name="Church D.M."/>
            <person name="Goodstadt L."/>
            <person name="Hillier L.W."/>
            <person name="Zody M.C."/>
            <person name="Goldstein S."/>
            <person name="She X."/>
            <person name="Bult C.J."/>
            <person name="Agarwala R."/>
            <person name="Cherry J.L."/>
            <person name="DiCuccio M."/>
            <person name="Hlavina W."/>
            <person name="Kapustin Y."/>
            <person name="Meric P."/>
            <person name="Maglott D."/>
            <person name="Birtle Z."/>
            <person name="Marques A.C."/>
            <person name="Graves T."/>
            <person name="Zhou S."/>
            <person name="Teague B."/>
            <person name="Potamousis K."/>
            <person name="Churas C."/>
            <person name="Place M."/>
            <person name="Herschleb J."/>
            <person name="Runnheim R."/>
            <person name="Forrest D."/>
            <person name="Amos-Landgraf J."/>
            <person name="Schwartz D.C."/>
            <person name="Cheng Z."/>
            <person name="Lindblad-Toh K."/>
            <person name="Eichler E.E."/>
            <person name="Ponting C.P."/>
        </authorList>
    </citation>
    <scope>NUCLEOTIDE SEQUENCE [LARGE SCALE GENOMIC DNA]</scope>
    <source>
        <strain>C57BL/6J</strain>
    </source>
</reference>
<reference key="3">
    <citation type="submission" date="2005-07" db="EMBL/GenBank/DDBJ databases">
        <authorList>
            <person name="Mural R.J."/>
            <person name="Adams M.D."/>
            <person name="Myers E.W."/>
            <person name="Smith H.O."/>
            <person name="Venter J.C."/>
        </authorList>
    </citation>
    <scope>NUCLEOTIDE SEQUENCE [LARGE SCALE GENOMIC DNA]</scope>
</reference>
<reference key="4">
    <citation type="journal article" date="2004" name="Genome Res.">
        <title>The status, quality, and expansion of the NIH full-length cDNA project: the Mammalian Gene Collection (MGC).</title>
        <authorList>
            <consortium name="The MGC Project Team"/>
        </authorList>
    </citation>
    <scope>NUCLEOTIDE SEQUENCE [LARGE SCALE MRNA]</scope>
    <source>
        <strain>FVB/N</strain>
        <tissue>Liver</tissue>
    </source>
</reference>
<reference key="5">
    <citation type="journal article" date="1994" name="Endocrinology">
        <title>Divergent tissue-specific and developmental expression of receptors for glucagon and glucagon-like peptide-1 in the mouse.</title>
        <authorList>
            <person name="Campos R.V."/>
            <person name="Lee Y.C."/>
            <person name="Drucker D.J."/>
        </authorList>
    </citation>
    <scope>NUCLEOTIDE SEQUENCE [MRNA] OF 324-458</scope>
    <source>
        <tissue>Brain</tissue>
    </source>
</reference>
<reference key="6">
    <citation type="journal article" date="2003" name="Proc. Natl. Acad. Sci. U.S.A.">
        <title>Lower blood glucose, hyperglucagonemia, and pancreatic alpha cell hyperplasia in glucagon receptor knockout mice.</title>
        <authorList>
            <person name="Gelling R.W."/>
            <person name="Du X.Q."/>
            <person name="Dichmann D.S."/>
            <person name="Romer J."/>
            <person name="Huang H."/>
            <person name="Cui L."/>
            <person name="Obici S."/>
            <person name="Tang B."/>
            <person name="Holst J.J."/>
            <person name="Fledelius C."/>
            <person name="Johansen P.B."/>
            <person name="Rossetti L."/>
            <person name="Jelicks L.A."/>
            <person name="Serup P."/>
            <person name="Nishimura E."/>
            <person name="Charron M.J."/>
        </authorList>
    </citation>
    <scope>DISRUPTION PHENOTYPE</scope>
    <scope>FUNCTION</scope>
    <scope>SUBCELLULAR LOCATION</scope>
</reference>
<reference key="7">
    <citation type="journal article" date="2006" name="Endocrinology">
        <title>Ablation of the glucagon receptor gene increases fetal lethality and produces alterations in islet development and maturation.</title>
        <authorList>
            <person name="Vuguin P.M."/>
            <person name="Kedees M.H."/>
            <person name="Cui L."/>
            <person name="Guz Y."/>
            <person name="Gelling R.W."/>
            <person name="Nejathaim M."/>
            <person name="Charron M.J."/>
            <person name="Teitelman G."/>
        </authorList>
    </citation>
    <scope>DISRUPTION PHENOTYPE</scope>
</reference>
<reference key="8">
    <citation type="journal article" date="2008" name="Cell Metab.">
        <title>The glucagon receptor is required for the adaptive metabolic response to fasting.</title>
        <authorList>
            <person name="Longuet C."/>
            <person name="Sinclair E.M."/>
            <person name="Maida A."/>
            <person name="Baggio L.L."/>
            <person name="Maziarz M."/>
            <person name="Charron M.J."/>
            <person name="Drucker D.J."/>
        </authorList>
    </citation>
    <scope>DISRUPTION PHENOTYPE</scope>
    <scope>FUNCTION</scope>
</reference>
<reference key="9">
    <citation type="journal article" date="2020" name="Biochem. J.">
        <title>Characterization of a naturally occurring mutation V368M in the human glucagon receptor and its association with metabolic disorders.</title>
        <authorList>
            <person name="Lin G."/>
            <person name="Liu Q."/>
            <person name="Dai A."/>
            <person name="Cai X."/>
            <person name="Zhou Q."/>
            <person name="Wang X."/>
            <person name="Chen Y."/>
            <person name="Ye C."/>
            <person name="Li J."/>
            <person name="Yang D."/>
            <person name="Wang M.W."/>
        </authorList>
    </citation>
    <scope>MUTAGENESIS OF VAL-369</scope>
    <scope>FUNCTION</scope>
</reference>
<feature type="signal peptide" evidence="4">
    <location>
        <begin position="1"/>
        <end position="26"/>
    </location>
</feature>
<feature type="chain" id="PRO_0000012833" description="Glucagon receptor">
    <location>
        <begin position="27"/>
        <end position="485"/>
    </location>
</feature>
<feature type="topological domain" description="Extracellular" evidence="3">
    <location>
        <begin position="27"/>
        <end position="137"/>
    </location>
</feature>
<feature type="transmembrane region" description="Helical; Name=1" evidence="3">
    <location>
        <begin position="138"/>
        <end position="162"/>
    </location>
</feature>
<feature type="topological domain" description="Cytoplasmic" evidence="3">
    <location>
        <begin position="163"/>
        <end position="174"/>
    </location>
</feature>
<feature type="transmembrane region" description="Helical; Name=2" evidence="3">
    <location>
        <begin position="175"/>
        <end position="199"/>
    </location>
</feature>
<feature type="topological domain" description="Extracellular" evidence="3">
    <location>
        <begin position="200"/>
        <end position="226"/>
    </location>
</feature>
<feature type="transmembrane region" description="Helical; Name=3" evidence="3">
    <location>
        <begin position="227"/>
        <end position="250"/>
    </location>
</feature>
<feature type="topological domain" description="Cytoplasmic" evidence="3">
    <location>
        <begin position="251"/>
        <end position="264"/>
    </location>
</feature>
<feature type="transmembrane region" description="Helical; Name=4" evidence="3">
    <location>
        <begin position="265"/>
        <end position="286"/>
    </location>
</feature>
<feature type="topological domain" description="Extracellular" evidence="3">
    <location>
        <begin position="287"/>
        <end position="304"/>
    </location>
</feature>
<feature type="transmembrane region" description="Helical; Name=5" evidence="3">
    <location>
        <begin position="305"/>
        <end position="327"/>
    </location>
</feature>
<feature type="topological domain" description="Cytoplasmic" evidence="3">
    <location>
        <begin position="328"/>
        <end position="351"/>
    </location>
</feature>
<feature type="transmembrane region" description="Helical; Name=6" evidence="3">
    <location>
        <begin position="352"/>
        <end position="370"/>
    </location>
</feature>
<feature type="topological domain" description="Extracellular" evidence="3">
    <location>
        <begin position="371"/>
        <end position="382"/>
    </location>
</feature>
<feature type="transmembrane region" description="Helical; Name=7" evidence="3">
    <location>
        <begin position="383"/>
        <end position="403"/>
    </location>
</feature>
<feature type="topological domain" description="Cytoplasmic" evidence="3">
    <location>
        <begin position="404"/>
        <end position="485"/>
    </location>
</feature>
<feature type="region of interest" description="Important for allosteric inhibitor binding" evidence="3">
    <location>
        <begin position="351"/>
        <end position="354"/>
    </location>
</feature>
<feature type="region of interest" description="Disordered" evidence="5">
    <location>
        <begin position="457"/>
        <end position="485"/>
    </location>
</feature>
<feature type="compositionally biased region" description="Polar residues" evidence="5">
    <location>
        <begin position="457"/>
        <end position="475"/>
    </location>
</feature>
<feature type="modified residue" description="Phosphoserine" evidence="3">
    <location>
        <position position="460"/>
    </location>
</feature>
<feature type="modified residue" description="Phosphoserine" evidence="2">
    <location>
        <position position="476"/>
    </location>
</feature>
<feature type="glycosylation site" description="N-linked (GlcNAc...) asparagine" evidence="4">
    <location>
        <position position="47"/>
    </location>
</feature>
<feature type="glycosylation site" description="N-linked (GlcNAc...) asparagine" evidence="4">
    <location>
        <position position="60"/>
    </location>
</feature>
<feature type="glycosylation site" description="N-linked (GlcNAc...) asparagine" evidence="4">
    <location>
        <position position="75"/>
    </location>
</feature>
<feature type="glycosylation site" description="N-linked (GlcNAc...) asparagine" evidence="4">
    <location>
        <position position="79"/>
    </location>
</feature>
<feature type="glycosylation site" description="N-linked (GlcNAc...) asparagine" evidence="4">
    <location>
        <position position="118"/>
    </location>
</feature>
<feature type="disulfide bond" evidence="3">
    <location>
        <begin position="44"/>
        <end position="68"/>
    </location>
</feature>
<feature type="disulfide bond" evidence="3">
    <location>
        <begin position="59"/>
        <end position="101"/>
    </location>
</feature>
<feature type="disulfide bond" evidence="3">
    <location>
        <begin position="82"/>
        <end position="122"/>
    </location>
</feature>
<feature type="disulfide bond" evidence="3">
    <location>
        <begin position="225"/>
        <end position="295"/>
    </location>
</feature>
<feature type="mutagenesis site" description="Results in impaired glucagon binding and glucagon-mediated signaling. Homozygous mice show hyperglucagonemia with alpha-cell hyperplasia and enlargement of the pancreas." evidence="9">
    <original>V</original>
    <variation>M</variation>
    <location>
        <position position="369"/>
    </location>
</feature>
<feature type="sequence conflict" description="In Ref. 1; AAA88244." evidence="11" ref="1">
    <original>K</original>
    <variation>N</variation>
    <location>
        <position position="65"/>
    </location>
</feature>
<feature type="sequence conflict" description="In Ref. 1; AAA88244." evidence="11" ref="1">
    <original>Y</original>
    <variation>C</variation>
    <location>
        <position position="89"/>
    </location>
</feature>
<feature type="sequence conflict" description="In Ref. 1; AAA88244." evidence="11" ref="1">
    <original>A</original>
    <variation>P</variation>
    <location>
        <position position="238"/>
    </location>
</feature>
<feature type="sequence conflict" description="In Ref. 3; AAB30529." evidence="11" ref="3">
    <original>H</original>
    <variation>R</variation>
    <location>
        <position position="325"/>
    </location>
</feature>
<feature type="sequence conflict" description="In Ref. 1; AAA88244." evidence="11" ref="1">
    <original>H</original>
    <variation>Q</variation>
    <location>
        <position position="328"/>
    </location>
</feature>
<evidence type="ECO:0000250" key="1">
    <source>
        <dbReference type="UniProtKB" id="A0A2Z2U4G9"/>
    </source>
</evidence>
<evidence type="ECO:0000250" key="2">
    <source>
        <dbReference type="UniProtKB" id="P30082"/>
    </source>
</evidence>
<evidence type="ECO:0000250" key="3">
    <source>
        <dbReference type="UniProtKB" id="P47871"/>
    </source>
</evidence>
<evidence type="ECO:0000255" key="4"/>
<evidence type="ECO:0000256" key="5">
    <source>
        <dbReference type="SAM" id="MobiDB-lite"/>
    </source>
</evidence>
<evidence type="ECO:0000269" key="6">
    <source>
    </source>
</evidence>
<evidence type="ECO:0000269" key="7">
    <source>
    </source>
</evidence>
<evidence type="ECO:0000269" key="8">
    <source>
    </source>
</evidence>
<evidence type="ECO:0000269" key="9">
    <source>
    </source>
</evidence>
<evidence type="ECO:0000269" key="10">
    <source>
    </source>
</evidence>
<evidence type="ECO:0000305" key="11"/>
<protein>
    <recommendedName>
        <fullName>Glucagon receptor</fullName>
        <shortName>GL-R</shortName>
    </recommendedName>
</protein>
<sequence>MPLTQLHCPHLLLLLLVLSCLPEAPSAQVMDFLFEKWKLYSDQCHHNLSLLPPPTELVCNRTFDKYSCWPDTPPNTTANISCPWYLPWYHKVQHRLVFKRCGPDGQWVRGPRGQPWRNASQCQLDDEEIEVQKGVAKMYSSQQVMYTVGYSLSLGALLLALVILLGLRKLHCTRNYIHGNLFASFVLKAGSVLVIDWLLKTRYSQKIGDDLSVSVWLSDGAMAGCRVATVIMQYGIIANYCWLLVEGVYLYSLLSLATFSERSFFSLYLGIGWGAPLLFVIPWVVVKCLFENVQCWTSNDNMGFWWILRIPVFLALLINFFIFVHIIHLLVAKLRAHQMHYADYKFRLARSTLTLIPLLGVHEVVFAFVTDEHAQGTLRSTKLFFDLFLSSFQGLLVAVLYCFLNKEVQAELMRRWRQWQEGKALQEERLASSHGSHMAPAGPCHGDPCEKLQLMSAGSSSGTGCVPSMETSLASSLPRLADSPT</sequence>
<keyword id="KW-1003">Cell membrane</keyword>
<keyword id="KW-1015">Disulfide bond</keyword>
<keyword id="KW-0297">G-protein coupled receptor</keyword>
<keyword id="KW-0325">Glycoprotein</keyword>
<keyword id="KW-0472">Membrane</keyword>
<keyword id="KW-0597">Phosphoprotein</keyword>
<keyword id="KW-0675">Receptor</keyword>
<keyword id="KW-1185">Reference proteome</keyword>
<keyword id="KW-0732">Signal</keyword>
<keyword id="KW-0807">Transducer</keyword>
<keyword id="KW-0812">Transmembrane</keyword>
<keyword id="KW-1133">Transmembrane helix</keyword>
<proteinExistence type="evidence at protein level"/>